<feature type="chain" id="PRO_0000157257" description="Protein transport protein Sec61 subunit beta">
    <location>
        <begin position="1"/>
        <end position="82"/>
    </location>
</feature>
<feature type="topological domain" description="Cytoplasmic" evidence="1">
    <location>
        <begin position="1"/>
        <end position="55"/>
    </location>
</feature>
<feature type="transmembrane region" description="Helical" evidence="1">
    <location>
        <begin position="56"/>
        <end position="76"/>
    </location>
</feature>
<feature type="region of interest" description="Disordered" evidence="2">
    <location>
        <begin position="1"/>
        <end position="34"/>
    </location>
</feature>
<feature type="modified residue" description="N-acetylmethionine" evidence="4">
    <location>
        <position position="1"/>
    </location>
</feature>
<comment type="function">
    <text>Necessary for protein translocation in the endoplasmic reticulum.</text>
</comment>
<comment type="subunit">
    <text>Heterotrimeric complex composed of SEC61-alpha, SEC61-beta and SEC61-gamma.</text>
</comment>
<comment type="subcellular location">
    <subcellularLocation>
        <location>Endoplasmic reticulum membrane</location>
        <topology>Single-pass membrane protein</topology>
    </subcellularLocation>
</comment>
<comment type="similarity">
    <text evidence="3">Belongs to the SEC61-beta family.</text>
</comment>
<gene>
    <name type="ordered locus">At2g45070</name>
    <name type="ORF">T14P1.12</name>
</gene>
<dbReference type="EMBL" id="Z26753">
    <property type="protein sequence ID" value="CAA81412.1"/>
    <property type="molecule type" value="mRNA"/>
</dbReference>
<dbReference type="EMBL" id="CP002685">
    <property type="protein sequence ID" value="AEC10502.1"/>
    <property type="molecule type" value="Genomic_DNA"/>
</dbReference>
<dbReference type="EMBL" id="CP002685">
    <property type="protein sequence ID" value="AEC10503.1"/>
    <property type="molecule type" value="Genomic_DNA"/>
</dbReference>
<dbReference type="EMBL" id="CP002685">
    <property type="protein sequence ID" value="AEC10504.1"/>
    <property type="molecule type" value="Genomic_DNA"/>
</dbReference>
<dbReference type="EMBL" id="CP002685">
    <property type="protein sequence ID" value="AEC10505.1"/>
    <property type="molecule type" value="Genomic_DNA"/>
</dbReference>
<dbReference type="EMBL" id="BT000904">
    <property type="protein sequence ID" value="AAN41304.1"/>
    <property type="molecule type" value="mRNA"/>
</dbReference>
<dbReference type="PIR" id="T52378">
    <property type="entry name" value="T52378"/>
</dbReference>
<dbReference type="BioGRID" id="4450">
    <property type="interactions" value="27"/>
</dbReference>
<dbReference type="FunCoup" id="P38389">
    <property type="interactions" value="242"/>
</dbReference>
<dbReference type="IntAct" id="P38389">
    <property type="interactions" value="27"/>
</dbReference>
<dbReference type="STRING" id="3702.P38389"/>
<dbReference type="iPTMnet" id="P38389"/>
<dbReference type="MetOSite" id="P38389"/>
<dbReference type="PaxDb" id="3702-AT2G45070.4"/>
<dbReference type="ProteomicsDB" id="226597"/>
<dbReference type="EnsemblPlants" id="AT2G45070.1">
    <property type="protein sequence ID" value="AT2G45070.1"/>
    <property type="gene ID" value="AT2G45070"/>
</dbReference>
<dbReference type="EnsemblPlants" id="AT2G45070.2">
    <property type="protein sequence ID" value="AT2G45070.2"/>
    <property type="gene ID" value="AT2G45070"/>
</dbReference>
<dbReference type="EnsemblPlants" id="AT2G45070.3">
    <property type="protein sequence ID" value="AT2G45070.3"/>
    <property type="gene ID" value="AT2G45070"/>
</dbReference>
<dbReference type="EnsemblPlants" id="AT2G45070.4">
    <property type="protein sequence ID" value="AT2G45070.4"/>
    <property type="gene ID" value="AT2G45070"/>
</dbReference>
<dbReference type="GeneID" id="819114"/>
<dbReference type="Gramene" id="AT2G45070.1">
    <property type="protein sequence ID" value="AT2G45070.1"/>
    <property type="gene ID" value="AT2G45070"/>
</dbReference>
<dbReference type="Gramene" id="AT2G45070.2">
    <property type="protein sequence ID" value="AT2G45070.2"/>
    <property type="gene ID" value="AT2G45070"/>
</dbReference>
<dbReference type="Gramene" id="AT2G45070.3">
    <property type="protein sequence ID" value="AT2G45070.3"/>
    <property type="gene ID" value="AT2G45070"/>
</dbReference>
<dbReference type="Gramene" id="AT2G45070.4">
    <property type="protein sequence ID" value="AT2G45070.4"/>
    <property type="gene ID" value="AT2G45070"/>
</dbReference>
<dbReference type="KEGG" id="ath:AT2G45070"/>
<dbReference type="Araport" id="AT2G45070"/>
<dbReference type="TAIR" id="AT2G45070">
    <property type="gene designation" value="SEC61 BETA"/>
</dbReference>
<dbReference type="eggNOG" id="KOG3457">
    <property type="taxonomic scope" value="Eukaryota"/>
</dbReference>
<dbReference type="HOGENOM" id="CLU_133423_3_0_1"/>
<dbReference type="InParanoid" id="P38389"/>
<dbReference type="OMA" id="KYTRSHH"/>
<dbReference type="OrthoDB" id="5401193at2759"/>
<dbReference type="PhylomeDB" id="P38389"/>
<dbReference type="PRO" id="PR:P38389"/>
<dbReference type="Proteomes" id="UP000006548">
    <property type="component" value="Chromosome 2"/>
</dbReference>
<dbReference type="ExpressionAtlas" id="P38389">
    <property type="expression patterns" value="baseline and differential"/>
</dbReference>
<dbReference type="GO" id="GO:0005789">
    <property type="term" value="C:endoplasmic reticulum membrane"/>
    <property type="evidence" value="ECO:0000353"/>
    <property type="project" value="TAIR"/>
</dbReference>
<dbReference type="GO" id="GO:0005784">
    <property type="term" value="C:Sec61 translocon complex"/>
    <property type="evidence" value="ECO:0007669"/>
    <property type="project" value="InterPro"/>
</dbReference>
<dbReference type="GO" id="GO:0006886">
    <property type="term" value="P:intracellular protein transport"/>
    <property type="evidence" value="ECO:0007669"/>
    <property type="project" value="InterPro"/>
</dbReference>
<dbReference type="InterPro" id="IPR030671">
    <property type="entry name" value="Sec61-beta/Sbh"/>
</dbReference>
<dbReference type="InterPro" id="IPR016482">
    <property type="entry name" value="SecG/Sec61-beta/Sbh"/>
</dbReference>
<dbReference type="PANTHER" id="PTHR13509">
    <property type="entry name" value="SEC61 SUBUNIT BETA"/>
    <property type="match status" value="1"/>
</dbReference>
<dbReference type="Pfam" id="PF03911">
    <property type="entry name" value="Sec61_beta"/>
    <property type="match status" value="1"/>
</dbReference>
<dbReference type="PIRSF" id="PIRSF006398">
    <property type="entry name" value="Sec61_beta_euk"/>
    <property type="match status" value="1"/>
</dbReference>
<keyword id="KW-0007">Acetylation</keyword>
<keyword id="KW-0256">Endoplasmic reticulum</keyword>
<keyword id="KW-0472">Membrane</keyword>
<keyword id="KW-0653">Protein transport</keyword>
<keyword id="KW-1185">Reference proteome</keyword>
<keyword id="KW-0811">Translocation</keyword>
<keyword id="KW-0812">Transmembrane</keyword>
<keyword id="KW-1133">Transmembrane helix</keyword>
<keyword id="KW-0813">Transport</keyword>
<accession>P38389</accession>
<reference key="1">
    <citation type="journal article" date="1994" name="Nature">
        <title>Evolutionary conservation of components of the protein translocation complex.</title>
        <authorList>
            <person name="Hartmann E."/>
            <person name="Sommer T."/>
            <person name="Prehn S."/>
            <person name="Goerlich D."/>
            <person name="Jentsch S."/>
            <person name="Rapoport T.A."/>
        </authorList>
    </citation>
    <scope>NUCLEOTIDE SEQUENCE [MRNA]</scope>
</reference>
<reference key="2">
    <citation type="journal article" date="1999" name="Nature">
        <title>Sequence and analysis of chromosome 2 of the plant Arabidopsis thaliana.</title>
        <authorList>
            <person name="Lin X."/>
            <person name="Kaul S."/>
            <person name="Rounsley S.D."/>
            <person name="Shea T.P."/>
            <person name="Benito M.-I."/>
            <person name="Town C.D."/>
            <person name="Fujii C.Y."/>
            <person name="Mason T.M."/>
            <person name="Bowman C.L."/>
            <person name="Barnstead M.E."/>
            <person name="Feldblyum T.V."/>
            <person name="Buell C.R."/>
            <person name="Ketchum K.A."/>
            <person name="Lee J.J."/>
            <person name="Ronning C.M."/>
            <person name="Koo H.L."/>
            <person name="Moffat K.S."/>
            <person name="Cronin L.A."/>
            <person name="Shen M."/>
            <person name="Pai G."/>
            <person name="Van Aken S."/>
            <person name="Umayam L."/>
            <person name="Tallon L.J."/>
            <person name="Gill J.E."/>
            <person name="Adams M.D."/>
            <person name="Carrera A.J."/>
            <person name="Creasy T.H."/>
            <person name="Goodman H.M."/>
            <person name="Somerville C.R."/>
            <person name="Copenhaver G.P."/>
            <person name="Preuss D."/>
            <person name="Nierman W.C."/>
            <person name="White O."/>
            <person name="Eisen J.A."/>
            <person name="Salzberg S.L."/>
            <person name="Fraser C.M."/>
            <person name="Venter J.C."/>
        </authorList>
    </citation>
    <scope>NUCLEOTIDE SEQUENCE [LARGE SCALE GENOMIC DNA]</scope>
    <source>
        <strain>cv. Columbia</strain>
    </source>
</reference>
<reference key="3">
    <citation type="journal article" date="2017" name="Plant J.">
        <title>Araport11: a complete reannotation of the Arabidopsis thaliana reference genome.</title>
        <authorList>
            <person name="Cheng C.Y."/>
            <person name="Krishnakumar V."/>
            <person name="Chan A.P."/>
            <person name="Thibaud-Nissen F."/>
            <person name="Schobel S."/>
            <person name="Town C.D."/>
        </authorList>
    </citation>
    <scope>GENOME REANNOTATION</scope>
    <source>
        <strain>cv. Columbia</strain>
    </source>
</reference>
<reference key="4">
    <citation type="journal article" date="2003" name="Science">
        <title>Empirical analysis of transcriptional activity in the Arabidopsis genome.</title>
        <authorList>
            <person name="Yamada K."/>
            <person name="Lim J."/>
            <person name="Dale J.M."/>
            <person name="Chen H."/>
            <person name="Shinn P."/>
            <person name="Palm C.J."/>
            <person name="Southwick A.M."/>
            <person name="Wu H.C."/>
            <person name="Kim C.J."/>
            <person name="Nguyen M."/>
            <person name="Pham P.K."/>
            <person name="Cheuk R.F."/>
            <person name="Karlin-Newmann G."/>
            <person name="Liu S.X."/>
            <person name="Lam B."/>
            <person name="Sakano H."/>
            <person name="Wu T."/>
            <person name="Yu G."/>
            <person name="Miranda M."/>
            <person name="Quach H.L."/>
            <person name="Tripp M."/>
            <person name="Chang C.H."/>
            <person name="Lee J.M."/>
            <person name="Toriumi M.J."/>
            <person name="Chan M.M."/>
            <person name="Tang C.C."/>
            <person name="Onodera C.S."/>
            <person name="Deng J.M."/>
            <person name="Akiyama K."/>
            <person name="Ansari Y."/>
            <person name="Arakawa T."/>
            <person name="Banh J."/>
            <person name="Banno F."/>
            <person name="Bowser L."/>
            <person name="Brooks S.Y."/>
            <person name="Carninci P."/>
            <person name="Chao Q."/>
            <person name="Choy N."/>
            <person name="Enju A."/>
            <person name="Goldsmith A.D."/>
            <person name="Gurjal M."/>
            <person name="Hansen N.F."/>
            <person name="Hayashizaki Y."/>
            <person name="Johnson-Hopson C."/>
            <person name="Hsuan V.W."/>
            <person name="Iida K."/>
            <person name="Karnes M."/>
            <person name="Khan S."/>
            <person name="Koesema E."/>
            <person name="Ishida J."/>
            <person name="Jiang P.X."/>
            <person name="Jones T."/>
            <person name="Kawai J."/>
            <person name="Kamiya A."/>
            <person name="Meyers C."/>
            <person name="Nakajima M."/>
            <person name="Narusaka M."/>
            <person name="Seki M."/>
            <person name="Sakurai T."/>
            <person name="Satou M."/>
            <person name="Tamse R."/>
            <person name="Vaysberg M."/>
            <person name="Wallender E.K."/>
            <person name="Wong C."/>
            <person name="Yamamura Y."/>
            <person name="Yuan S."/>
            <person name="Shinozaki K."/>
            <person name="Davis R.W."/>
            <person name="Theologis A."/>
            <person name="Ecker J.R."/>
        </authorList>
    </citation>
    <scope>NUCLEOTIDE SEQUENCE [LARGE SCALE MRNA]</scope>
    <source>
        <strain>cv. Columbia</strain>
    </source>
</reference>
<reference key="5">
    <citation type="journal article" date="2012" name="Mol. Cell. Proteomics">
        <title>Comparative large-scale characterisation of plant vs. mammal proteins reveals similar and idiosyncratic N-alpha acetylation features.</title>
        <authorList>
            <person name="Bienvenut W.V."/>
            <person name="Sumpton D."/>
            <person name="Martinez A."/>
            <person name="Lilla S."/>
            <person name="Espagne C."/>
            <person name="Meinnel T."/>
            <person name="Giglione C."/>
        </authorList>
    </citation>
    <scope>ACETYLATION [LARGE SCALE ANALYSIS] AT MET-1</scope>
    <scope>IDENTIFICATION BY MASS SPECTROMETRY [LARGE SCALE ANALYSIS]</scope>
</reference>
<organism>
    <name type="scientific">Arabidopsis thaliana</name>
    <name type="common">Mouse-ear cress</name>
    <dbReference type="NCBI Taxonomy" id="3702"/>
    <lineage>
        <taxon>Eukaryota</taxon>
        <taxon>Viridiplantae</taxon>
        <taxon>Streptophyta</taxon>
        <taxon>Embryophyta</taxon>
        <taxon>Tracheophyta</taxon>
        <taxon>Spermatophyta</taxon>
        <taxon>Magnoliopsida</taxon>
        <taxon>eudicotyledons</taxon>
        <taxon>Gunneridae</taxon>
        <taxon>Pentapetalae</taxon>
        <taxon>rosids</taxon>
        <taxon>malvids</taxon>
        <taxon>Brassicales</taxon>
        <taxon>Brassicaceae</taxon>
        <taxon>Camelineae</taxon>
        <taxon>Arabidopsis</taxon>
    </lineage>
</organism>
<name>SC61B_ARATH</name>
<sequence>MVGSGAPQRGSAAATASMRRRKPTSGAGGGGASGGAAGSMLQFYTDDAPGLKISPNVVLIMSIGFIAFVAVLHVMGKLYFVK</sequence>
<evidence type="ECO:0000255" key="1"/>
<evidence type="ECO:0000256" key="2">
    <source>
        <dbReference type="SAM" id="MobiDB-lite"/>
    </source>
</evidence>
<evidence type="ECO:0000305" key="3"/>
<evidence type="ECO:0007744" key="4">
    <source>
    </source>
</evidence>
<protein>
    <recommendedName>
        <fullName>Protein transport protein Sec61 subunit beta</fullName>
    </recommendedName>
</protein>
<proteinExistence type="evidence at protein level"/>